<sequence>MTKESADKQQSTAENIAVSMQNVTISYGKSAAVKDVFCEISTGKVTAFIGPSGCGKSTLLRSINRMNDLIEGCTLKGRVLFDGVDLYDAAVDPVEVRRRIGMVFQQPNPFPKSIYENVAFGARINGYTGNMDELVERSLRQAAVWDECKDKLKDSGCSLSGGQQQRLCIARTIATQPEVILMDEPCSALDPISTLKIEETMHELKKSFTIVIVTHNMQQAVRVSDETAFFNAETVENRSGKVGYLVEFNDTQSIFNSPQQQATQDYVSGRFG</sequence>
<organism>
    <name type="scientific">Synechococcus sp. (strain CC9902)</name>
    <dbReference type="NCBI Taxonomy" id="316279"/>
    <lineage>
        <taxon>Bacteria</taxon>
        <taxon>Bacillati</taxon>
        <taxon>Cyanobacteriota</taxon>
        <taxon>Cyanophyceae</taxon>
        <taxon>Synechococcales</taxon>
        <taxon>Synechococcaceae</taxon>
        <taxon>Synechococcus</taxon>
    </lineage>
</organism>
<comment type="function">
    <text evidence="1">Part of the ABC transporter complex PstSACB involved in phosphate import. Responsible for energy coupling to the transport system.</text>
</comment>
<comment type="catalytic activity">
    <reaction evidence="1">
        <text>phosphate(out) + ATP + H2O = ADP + 2 phosphate(in) + H(+)</text>
        <dbReference type="Rhea" id="RHEA:24440"/>
        <dbReference type="ChEBI" id="CHEBI:15377"/>
        <dbReference type="ChEBI" id="CHEBI:15378"/>
        <dbReference type="ChEBI" id="CHEBI:30616"/>
        <dbReference type="ChEBI" id="CHEBI:43474"/>
        <dbReference type="ChEBI" id="CHEBI:456216"/>
        <dbReference type="EC" id="7.3.2.1"/>
    </reaction>
</comment>
<comment type="subunit">
    <text evidence="1">The complex is composed of two ATP-binding proteins (PstB), two transmembrane proteins (PstC and PstA) and a solute-binding protein (PstS).</text>
</comment>
<comment type="subcellular location">
    <subcellularLocation>
        <location evidence="1">Cell inner membrane</location>
        <topology evidence="1">Peripheral membrane protein</topology>
    </subcellularLocation>
</comment>
<comment type="similarity">
    <text evidence="1">Belongs to the ABC transporter superfamily. Phosphate importer (TC 3.A.1.7) family.</text>
</comment>
<gene>
    <name evidence="1" type="primary">pstB</name>
    <name type="ordered locus">Syncc9902_1089</name>
</gene>
<accession>Q3AXX4</accession>
<keyword id="KW-0067">ATP-binding</keyword>
<keyword id="KW-0997">Cell inner membrane</keyword>
<keyword id="KW-1003">Cell membrane</keyword>
<keyword id="KW-0472">Membrane</keyword>
<keyword id="KW-0547">Nucleotide-binding</keyword>
<keyword id="KW-0592">Phosphate transport</keyword>
<keyword id="KW-1185">Reference proteome</keyword>
<keyword id="KW-1278">Translocase</keyword>
<keyword id="KW-0813">Transport</keyword>
<protein>
    <recommendedName>
        <fullName evidence="1">Phosphate import ATP-binding protein PstB</fullName>
        <ecNumber evidence="1">7.3.2.1</ecNumber>
    </recommendedName>
    <alternativeName>
        <fullName evidence="1">ABC phosphate transporter</fullName>
    </alternativeName>
    <alternativeName>
        <fullName evidence="1">Phosphate-transporting ATPase</fullName>
    </alternativeName>
</protein>
<proteinExistence type="inferred from homology"/>
<evidence type="ECO:0000255" key="1">
    <source>
        <dbReference type="HAMAP-Rule" id="MF_01702"/>
    </source>
</evidence>
<feature type="chain" id="PRO_0000272558" description="Phosphate import ATP-binding protein PstB">
    <location>
        <begin position="1"/>
        <end position="272"/>
    </location>
</feature>
<feature type="domain" description="ABC transporter" evidence="1">
    <location>
        <begin position="18"/>
        <end position="257"/>
    </location>
</feature>
<feature type="binding site" evidence="1">
    <location>
        <begin position="50"/>
        <end position="57"/>
    </location>
    <ligand>
        <name>ATP</name>
        <dbReference type="ChEBI" id="CHEBI:30616"/>
    </ligand>
</feature>
<name>PSTB_SYNS9</name>
<reference key="1">
    <citation type="submission" date="2005-08" db="EMBL/GenBank/DDBJ databases">
        <title>Complete sequence of Synechococcus sp. CC9902.</title>
        <authorList>
            <person name="Copeland A."/>
            <person name="Lucas S."/>
            <person name="Lapidus A."/>
            <person name="Barry K."/>
            <person name="Detter J.C."/>
            <person name="Glavina T."/>
            <person name="Hammon N."/>
            <person name="Israni S."/>
            <person name="Pitluck S."/>
            <person name="Martinez M."/>
            <person name="Schmutz J."/>
            <person name="Larimer F."/>
            <person name="Land M."/>
            <person name="Kyrpides N."/>
            <person name="Ivanova N."/>
            <person name="Richardson P."/>
        </authorList>
    </citation>
    <scope>NUCLEOTIDE SEQUENCE [LARGE SCALE GENOMIC DNA]</scope>
    <source>
        <strain>CC9902</strain>
    </source>
</reference>
<dbReference type="EC" id="7.3.2.1" evidence="1"/>
<dbReference type="EMBL" id="CP000097">
    <property type="protein sequence ID" value="ABB26053.1"/>
    <property type="molecule type" value="Genomic_DNA"/>
</dbReference>
<dbReference type="RefSeq" id="WP_011359883.1">
    <property type="nucleotide sequence ID" value="NC_007513.1"/>
</dbReference>
<dbReference type="SMR" id="Q3AXX4"/>
<dbReference type="STRING" id="316279.Syncc9902_1089"/>
<dbReference type="KEGG" id="sye:Syncc9902_1089"/>
<dbReference type="eggNOG" id="COG1117">
    <property type="taxonomic scope" value="Bacteria"/>
</dbReference>
<dbReference type="HOGENOM" id="CLU_000604_1_22_3"/>
<dbReference type="OrthoDB" id="9802185at2"/>
<dbReference type="Proteomes" id="UP000002712">
    <property type="component" value="Chromosome"/>
</dbReference>
<dbReference type="GO" id="GO:0005886">
    <property type="term" value="C:plasma membrane"/>
    <property type="evidence" value="ECO:0007669"/>
    <property type="project" value="UniProtKB-SubCell"/>
</dbReference>
<dbReference type="GO" id="GO:0005524">
    <property type="term" value="F:ATP binding"/>
    <property type="evidence" value="ECO:0007669"/>
    <property type="project" value="UniProtKB-KW"/>
</dbReference>
<dbReference type="GO" id="GO:0016887">
    <property type="term" value="F:ATP hydrolysis activity"/>
    <property type="evidence" value="ECO:0007669"/>
    <property type="project" value="InterPro"/>
</dbReference>
<dbReference type="GO" id="GO:0015415">
    <property type="term" value="F:ATPase-coupled phosphate ion transmembrane transporter activity"/>
    <property type="evidence" value="ECO:0007669"/>
    <property type="project" value="UniProtKB-EC"/>
</dbReference>
<dbReference type="GO" id="GO:0035435">
    <property type="term" value="P:phosphate ion transmembrane transport"/>
    <property type="evidence" value="ECO:0007669"/>
    <property type="project" value="InterPro"/>
</dbReference>
<dbReference type="CDD" id="cd03260">
    <property type="entry name" value="ABC_PstB_phosphate_transporter"/>
    <property type="match status" value="1"/>
</dbReference>
<dbReference type="Gene3D" id="3.40.50.300">
    <property type="entry name" value="P-loop containing nucleotide triphosphate hydrolases"/>
    <property type="match status" value="1"/>
</dbReference>
<dbReference type="InterPro" id="IPR003593">
    <property type="entry name" value="AAA+_ATPase"/>
</dbReference>
<dbReference type="InterPro" id="IPR003439">
    <property type="entry name" value="ABC_transporter-like_ATP-bd"/>
</dbReference>
<dbReference type="InterPro" id="IPR017871">
    <property type="entry name" value="ABC_transporter-like_CS"/>
</dbReference>
<dbReference type="InterPro" id="IPR027417">
    <property type="entry name" value="P-loop_NTPase"/>
</dbReference>
<dbReference type="InterPro" id="IPR005670">
    <property type="entry name" value="PstB-like"/>
</dbReference>
<dbReference type="NCBIfam" id="TIGR00972">
    <property type="entry name" value="3a0107s01c2"/>
    <property type="match status" value="1"/>
</dbReference>
<dbReference type="PANTHER" id="PTHR43423">
    <property type="entry name" value="ABC TRANSPORTER I FAMILY MEMBER 17"/>
    <property type="match status" value="1"/>
</dbReference>
<dbReference type="PANTHER" id="PTHR43423:SF1">
    <property type="entry name" value="ABC TRANSPORTER I FAMILY MEMBER 17"/>
    <property type="match status" value="1"/>
</dbReference>
<dbReference type="Pfam" id="PF00005">
    <property type="entry name" value="ABC_tran"/>
    <property type="match status" value="1"/>
</dbReference>
<dbReference type="SMART" id="SM00382">
    <property type="entry name" value="AAA"/>
    <property type="match status" value="1"/>
</dbReference>
<dbReference type="SUPFAM" id="SSF52540">
    <property type="entry name" value="P-loop containing nucleoside triphosphate hydrolases"/>
    <property type="match status" value="1"/>
</dbReference>
<dbReference type="PROSITE" id="PS00211">
    <property type="entry name" value="ABC_TRANSPORTER_1"/>
    <property type="match status" value="1"/>
</dbReference>
<dbReference type="PROSITE" id="PS50893">
    <property type="entry name" value="ABC_TRANSPORTER_2"/>
    <property type="match status" value="1"/>
</dbReference>
<dbReference type="PROSITE" id="PS51238">
    <property type="entry name" value="PSTB"/>
    <property type="match status" value="1"/>
</dbReference>